<geneLocation type="chloroplast"/>
<gene>
    <name evidence="1" type="primary">rbcL</name>
</gene>
<reference key="1">
    <citation type="journal article" date="1992" name="Ann. Mo. Bot. Gard.">
        <title>Monophyly of the Asteridae and identification of their major lineages inferred from DNA sequences of rbcL.</title>
        <authorList>
            <person name="Olmstead R.G."/>
            <person name="Michaels H.J."/>
            <person name="Scott K.M."/>
            <person name="Palmer J.D."/>
        </authorList>
        <dbReference type="AGRICOLA" id="IND93014998"/>
    </citation>
    <scope>NUCLEOTIDE SEQUENCE [GENOMIC DNA]</scope>
</reference>
<proteinExistence type="inferred from homology"/>
<keyword id="KW-0113">Calvin cycle</keyword>
<keyword id="KW-0120">Carbon dioxide fixation</keyword>
<keyword id="KW-0150">Chloroplast</keyword>
<keyword id="KW-1015">Disulfide bond</keyword>
<keyword id="KW-0456">Lyase</keyword>
<keyword id="KW-0460">Magnesium</keyword>
<keyword id="KW-0479">Metal-binding</keyword>
<keyword id="KW-0503">Monooxygenase</keyword>
<keyword id="KW-0560">Oxidoreductase</keyword>
<keyword id="KW-0601">Photorespiration</keyword>
<keyword id="KW-0602">Photosynthesis</keyword>
<keyword id="KW-0934">Plastid</keyword>
<accession>Q05986</accession>
<comment type="function">
    <text evidence="1">RuBisCO catalyzes two reactions: the carboxylation of D-ribulose 1,5-bisphosphate, the primary event in carbon dioxide fixation, as well as the oxidative fragmentation of the pentose substrate in the photorespiration process. Both reactions occur simultaneously and in competition at the same active site.</text>
</comment>
<comment type="catalytic activity">
    <reaction evidence="1">
        <text>2 (2R)-3-phosphoglycerate + 2 H(+) = D-ribulose 1,5-bisphosphate + CO2 + H2O</text>
        <dbReference type="Rhea" id="RHEA:23124"/>
        <dbReference type="ChEBI" id="CHEBI:15377"/>
        <dbReference type="ChEBI" id="CHEBI:15378"/>
        <dbReference type="ChEBI" id="CHEBI:16526"/>
        <dbReference type="ChEBI" id="CHEBI:57870"/>
        <dbReference type="ChEBI" id="CHEBI:58272"/>
        <dbReference type="EC" id="4.1.1.39"/>
    </reaction>
</comment>
<comment type="catalytic activity">
    <reaction evidence="1">
        <text>D-ribulose 1,5-bisphosphate + O2 = 2-phosphoglycolate + (2R)-3-phosphoglycerate + 2 H(+)</text>
        <dbReference type="Rhea" id="RHEA:36631"/>
        <dbReference type="ChEBI" id="CHEBI:15378"/>
        <dbReference type="ChEBI" id="CHEBI:15379"/>
        <dbReference type="ChEBI" id="CHEBI:57870"/>
        <dbReference type="ChEBI" id="CHEBI:58033"/>
        <dbReference type="ChEBI" id="CHEBI:58272"/>
    </reaction>
</comment>
<comment type="cofactor">
    <cofactor evidence="1">
        <name>Mg(2+)</name>
        <dbReference type="ChEBI" id="CHEBI:18420"/>
    </cofactor>
    <text evidence="1">Binds 1 Mg(2+) ion per subunit.</text>
</comment>
<comment type="subunit">
    <text evidence="1">Heterohexadecamer of 8 large chains and 8 small chains; disulfide-linked. The disulfide link is formed within the large subunit homodimers.</text>
</comment>
<comment type="subcellular location">
    <subcellularLocation>
        <location>Plastid</location>
        <location>Chloroplast</location>
    </subcellularLocation>
</comment>
<comment type="PTM">
    <text evidence="1">The disulfide bond which can form in the large chain dimeric partners within the hexadecamer appears to be associated with oxidative stress and protein turnover.</text>
</comment>
<comment type="miscellaneous">
    <text evidence="1">The basic functional RuBisCO is composed of a large chain homodimer in a 'head-to-tail' conformation. In form I RuBisCO this homodimer is arranged in a barrel-like tetramer with the small subunits forming a tetrameric 'cap' on each end of the 'barrel'.</text>
</comment>
<comment type="similarity">
    <text evidence="1">Belongs to the RuBisCO large chain family. Type I subfamily.</text>
</comment>
<dbReference type="EC" id="4.1.1.39" evidence="1"/>
<dbReference type="EMBL" id="L11681">
    <property type="protein sequence ID" value="AAA84121.1"/>
    <property type="molecule type" value="Genomic_DNA"/>
</dbReference>
<dbReference type="SMR" id="Q05986"/>
<dbReference type="GO" id="GO:0009507">
    <property type="term" value="C:chloroplast"/>
    <property type="evidence" value="ECO:0007669"/>
    <property type="project" value="UniProtKB-SubCell"/>
</dbReference>
<dbReference type="GO" id="GO:0000287">
    <property type="term" value="F:magnesium ion binding"/>
    <property type="evidence" value="ECO:0007669"/>
    <property type="project" value="InterPro"/>
</dbReference>
<dbReference type="GO" id="GO:0004497">
    <property type="term" value="F:monooxygenase activity"/>
    <property type="evidence" value="ECO:0007669"/>
    <property type="project" value="UniProtKB-KW"/>
</dbReference>
<dbReference type="GO" id="GO:0016984">
    <property type="term" value="F:ribulose-bisphosphate carboxylase activity"/>
    <property type="evidence" value="ECO:0007669"/>
    <property type="project" value="UniProtKB-EC"/>
</dbReference>
<dbReference type="GO" id="GO:0009853">
    <property type="term" value="P:photorespiration"/>
    <property type="evidence" value="ECO:0007669"/>
    <property type="project" value="UniProtKB-KW"/>
</dbReference>
<dbReference type="GO" id="GO:0019253">
    <property type="term" value="P:reductive pentose-phosphate cycle"/>
    <property type="evidence" value="ECO:0007669"/>
    <property type="project" value="UniProtKB-KW"/>
</dbReference>
<dbReference type="CDD" id="cd08212">
    <property type="entry name" value="RuBisCO_large_I"/>
    <property type="match status" value="1"/>
</dbReference>
<dbReference type="FunFam" id="3.20.20.110:FF:000001">
    <property type="entry name" value="Ribulose bisphosphate carboxylase large chain"/>
    <property type="match status" value="1"/>
</dbReference>
<dbReference type="Gene3D" id="3.20.20.110">
    <property type="entry name" value="Ribulose bisphosphate carboxylase, large subunit, C-terminal domain"/>
    <property type="match status" value="1"/>
</dbReference>
<dbReference type="Gene3D" id="3.30.70.150">
    <property type="entry name" value="RuBisCO large subunit, N-terminal domain"/>
    <property type="match status" value="1"/>
</dbReference>
<dbReference type="HAMAP" id="MF_01338">
    <property type="entry name" value="RuBisCO_L_type1"/>
    <property type="match status" value="1"/>
</dbReference>
<dbReference type="InterPro" id="IPR033966">
    <property type="entry name" value="RuBisCO"/>
</dbReference>
<dbReference type="InterPro" id="IPR020878">
    <property type="entry name" value="RuBisCo_large_chain_AS"/>
</dbReference>
<dbReference type="InterPro" id="IPR000685">
    <property type="entry name" value="RuBisCO_lsu_C"/>
</dbReference>
<dbReference type="InterPro" id="IPR036376">
    <property type="entry name" value="RuBisCO_lsu_C_sf"/>
</dbReference>
<dbReference type="InterPro" id="IPR017443">
    <property type="entry name" value="RuBisCO_lsu_fd_N"/>
</dbReference>
<dbReference type="InterPro" id="IPR036422">
    <property type="entry name" value="RuBisCO_lsu_N_sf"/>
</dbReference>
<dbReference type="InterPro" id="IPR020888">
    <property type="entry name" value="RuBisCO_lsuI"/>
</dbReference>
<dbReference type="NCBIfam" id="NF003252">
    <property type="entry name" value="PRK04208.1"/>
    <property type="match status" value="1"/>
</dbReference>
<dbReference type="PANTHER" id="PTHR42704">
    <property type="entry name" value="RIBULOSE BISPHOSPHATE CARBOXYLASE"/>
    <property type="match status" value="1"/>
</dbReference>
<dbReference type="PANTHER" id="PTHR42704:SF15">
    <property type="entry name" value="RIBULOSE BISPHOSPHATE CARBOXYLASE LARGE CHAIN"/>
    <property type="match status" value="1"/>
</dbReference>
<dbReference type="Pfam" id="PF00016">
    <property type="entry name" value="RuBisCO_large"/>
    <property type="match status" value="1"/>
</dbReference>
<dbReference type="Pfam" id="PF02788">
    <property type="entry name" value="RuBisCO_large_N"/>
    <property type="match status" value="1"/>
</dbReference>
<dbReference type="SFLD" id="SFLDG01052">
    <property type="entry name" value="RuBisCO"/>
    <property type="match status" value="1"/>
</dbReference>
<dbReference type="SFLD" id="SFLDS00014">
    <property type="entry name" value="RuBisCO"/>
    <property type="match status" value="1"/>
</dbReference>
<dbReference type="SFLD" id="SFLDG00301">
    <property type="entry name" value="RuBisCO-like_proteins"/>
    <property type="match status" value="1"/>
</dbReference>
<dbReference type="SUPFAM" id="SSF51649">
    <property type="entry name" value="RuBisCo, C-terminal domain"/>
    <property type="match status" value="1"/>
</dbReference>
<dbReference type="SUPFAM" id="SSF54966">
    <property type="entry name" value="RuBisCO, large subunit, small (N-terminal) domain"/>
    <property type="match status" value="1"/>
</dbReference>
<dbReference type="PROSITE" id="PS00157">
    <property type="entry name" value="RUBISCO_LARGE"/>
    <property type="match status" value="1"/>
</dbReference>
<feature type="chain" id="PRO_0000062391" description="Ribulose bisphosphate carboxylase large chain">
    <location>
        <begin position="1" status="less than"/>
        <end position="443"/>
    </location>
</feature>
<feature type="active site" description="Proton acceptor" evidence="1">
    <location>
        <position position="141"/>
    </location>
</feature>
<feature type="active site" description="Proton acceptor" evidence="1">
    <location>
        <position position="260"/>
    </location>
</feature>
<feature type="binding site" description="in homodimeric partner" evidence="1">
    <location>
        <position position="89"/>
    </location>
    <ligand>
        <name>substrate</name>
    </ligand>
</feature>
<feature type="binding site" evidence="1">
    <location>
        <position position="139"/>
    </location>
    <ligand>
        <name>substrate</name>
    </ligand>
</feature>
<feature type="binding site" evidence="1">
    <location>
        <position position="143"/>
    </location>
    <ligand>
        <name>substrate</name>
    </ligand>
</feature>
<feature type="binding site" description="via carbamate group" evidence="1">
    <location>
        <position position="167"/>
    </location>
    <ligand>
        <name>Mg(2+)</name>
        <dbReference type="ChEBI" id="CHEBI:18420"/>
    </ligand>
</feature>
<feature type="binding site" evidence="1">
    <location>
        <position position="169"/>
    </location>
    <ligand>
        <name>Mg(2+)</name>
        <dbReference type="ChEBI" id="CHEBI:18420"/>
    </ligand>
</feature>
<feature type="binding site" evidence="1">
    <location>
        <position position="170"/>
    </location>
    <ligand>
        <name>Mg(2+)</name>
        <dbReference type="ChEBI" id="CHEBI:18420"/>
    </ligand>
</feature>
<feature type="binding site" evidence="1">
    <location>
        <position position="261"/>
    </location>
    <ligand>
        <name>substrate</name>
    </ligand>
</feature>
<feature type="binding site" evidence="1">
    <location>
        <position position="293"/>
    </location>
    <ligand>
        <name>substrate</name>
    </ligand>
</feature>
<feature type="binding site" evidence="1">
    <location>
        <position position="345"/>
    </location>
    <ligand>
        <name>substrate</name>
    </ligand>
</feature>
<feature type="site" description="Transition state stabilizer" evidence="1">
    <location>
        <position position="300"/>
    </location>
</feature>
<feature type="modified residue" description="N6-carboxylysine" evidence="1">
    <location>
        <position position="167"/>
    </location>
</feature>
<feature type="disulfide bond" description="Interchain; in linked form" evidence="1">
    <location>
        <position position="213"/>
    </location>
</feature>
<feature type="non-terminal residue">
    <location>
        <position position="1"/>
    </location>
</feature>
<sequence length="443" mass="49042">DILAAFRVSPQPGVPPEEAGAAVAAESSTGTWTTVWTDGLTSLDRYKGRCYQIEPVPGEPDQYICYVAYPLDLFEEGSVTNMFTSIVGNVFGFKALRALRLEDLRIPVAYVKTFQGPPHGIQVERDKLNKYGRPLLGCTIKPKLGLSAKNYGRACYECLRGGLDFTKDDENVNSQPFMRWRDRFLFCAEAIYKSQAETGEIKGHYLNATAGTCEEMMKRAIFARELGVPIIMHDYLTGGFTANTSLAHYCRDNGLLLHIHRAMHAVIDRQKNHGIHFRVLAKALRMSGGDHIHSGTVVGKLEGERDITLGFVDLLRDDYIEKDRSRGIYFTQDWVSLPGVIPVASGGIHVWHMPALTEIFGDDSVLQFGGGTLGHPWGNAPGAVANRVALEACVQARNEGRDLAVEGNTIIREACKWSPELAAACEVWKEIKFEFAAMDTLDK</sequence>
<protein>
    <recommendedName>
        <fullName evidence="1">Ribulose bisphosphate carboxylase large chain</fullName>
        <shortName evidence="1">RuBisCO large subunit</shortName>
        <ecNumber evidence="1">4.1.1.39</ecNumber>
    </recommendedName>
</protein>
<evidence type="ECO:0000255" key="1">
    <source>
        <dbReference type="HAMAP-Rule" id="MF_01338"/>
    </source>
</evidence>
<organism>
    <name type="scientific">Callitriche heterophylla</name>
    <name type="common">Large water-starwort</name>
    <dbReference type="NCBI Taxonomy" id="13381"/>
    <lineage>
        <taxon>Eukaryota</taxon>
        <taxon>Viridiplantae</taxon>
        <taxon>Streptophyta</taxon>
        <taxon>Embryophyta</taxon>
        <taxon>Tracheophyta</taxon>
        <taxon>Spermatophyta</taxon>
        <taxon>Magnoliopsida</taxon>
        <taxon>eudicotyledons</taxon>
        <taxon>Gunneridae</taxon>
        <taxon>Pentapetalae</taxon>
        <taxon>asterids</taxon>
        <taxon>lamiids</taxon>
        <taxon>Lamiales</taxon>
        <taxon>Plantaginaceae</taxon>
        <taxon>Callitricheae</taxon>
        <taxon>Callitriche</taxon>
    </lineage>
</organism>
<name>RBL_CALHE</name>